<protein>
    <recommendedName>
        <fullName evidence="1">Large ribosomal subunit protein bL36</fullName>
    </recommendedName>
    <alternativeName>
        <fullName evidence="2">50S ribosomal protein L36</fullName>
    </alternativeName>
</protein>
<name>RL36_RHIWR</name>
<accession>A5VAZ8</accession>
<sequence>MKIRNSLKSLKDRHRDNRVIRRRGRTYVINKTNRRFKARQG</sequence>
<evidence type="ECO:0000255" key="1">
    <source>
        <dbReference type="HAMAP-Rule" id="MF_00251"/>
    </source>
</evidence>
<evidence type="ECO:0000305" key="2"/>
<comment type="similarity">
    <text evidence="1">Belongs to the bacterial ribosomal protein bL36 family.</text>
</comment>
<keyword id="KW-1185">Reference proteome</keyword>
<keyword id="KW-0687">Ribonucleoprotein</keyword>
<keyword id="KW-0689">Ribosomal protein</keyword>
<gene>
    <name evidence="1" type="primary">rpmJ</name>
    <name type="ordered locus">Swit_3115</name>
</gene>
<reference key="1">
    <citation type="journal article" date="2010" name="J. Bacteriol.">
        <title>Genome sequence of the dioxin-mineralizing bacterium Sphingomonas wittichii RW1.</title>
        <authorList>
            <person name="Miller T.R."/>
            <person name="Delcher A.L."/>
            <person name="Salzberg S.L."/>
            <person name="Saunders E."/>
            <person name="Detter J.C."/>
            <person name="Halden R.U."/>
        </authorList>
    </citation>
    <scope>NUCLEOTIDE SEQUENCE [LARGE SCALE GENOMIC DNA]</scope>
    <source>
        <strain>DSM 6014 / CCUG 31198 / JCM 15750 / NBRC 105917 / EY 4224 / RW1</strain>
    </source>
</reference>
<organism>
    <name type="scientific">Rhizorhabdus wittichii (strain DSM 6014 / CCUG 31198 / JCM 15750 / NBRC 105917 / EY 4224 / RW1)</name>
    <name type="common">Sphingomonas wittichii</name>
    <dbReference type="NCBI Taxonomy" id="392499"/>
    <lineage>
        <taxon>Bacteria</taxon>
        <taxon>Pseudomonadati</taxon>
        <taxon>Pseudomonadota</taxon>
        <taxon>Alphaproteobacteria</taxon>
        <taxon>Sphingomonadales</taxon>
        <taxon>Sphingomonadaceae</taxon>
        <taxon>Rhizorhabdus</taxon>
    </lineage>
</organism>
<feature type="chain" id="PRO_1000003418" description="Large ribosomal subunit protein bL36">
    <location>
        <begin position="1"/>
        <end position="41"/>
    </location>
</feature>
<dbReference type="EMBL" id="CP000699">
    <property type="protein sequence ID" value="ABQ69464.1"/>
    <property type="molecule type" value="Genomic_DNA"/>
</dbReference>
<dbReference type="SMR" id="A5VAZ8"/>
<dbReference type="STRING" id="392499.Swit_3115"/>
<dbReference type="PaxDb" id="392499-Swit_3115"/>
<dbReference type="KEGG" id="swi:Swit_3115"/>
<dbReference type="eggNOG" id="COG0257">
    <property type="taxonomic scope" value="Bacteria"/>
</dbReference>
<dbReference type="HOGENOM" id="CLU_135723_3_2_5"/>
<dbReference type="Proteomes" id="UP000001989">
    <property type="component" value="Chromosome"/>
</dbReference>
<dbReference type="GO" id="GO:1990904">
    <property type="term" value="C:ribonucleoprotein complex"/>
    <property type="evidence" value="ECO:0007669"/>
    <property type="project" value="UniProtKB-KW"/>
</dbReference>
<dbReference type="GO" id="GO:0005840">
    <property type="term" value="C:ribosome"/>
    <property type="evidence" value="ECO:0007669"/>
    <property type="project" value="UniProtKB-KW"/>
</dbReference>
<dbReference type="GO" id="GO:0003735">
    <property type="term" value="F:structural constituent of ribosome"/>
    <property type="evidence" value="ECO:0007669"/>
    <property type="project" value="InterPro"/>
</dbReference>
<dbReference type="GO" id="GO:0006412">
    <property type="term" value="P:translation"/>
    <property type="evidence" value="ECO:0007669"/>
    <property type="project" value="UniProtKB-UniRule"/>
</dbReference>
<dbReference type="HAMAP" id="MF_00251">
    <property type="entry name" value="Ribosomal_bL36"/>
    <property type="match status" value="1"/>
</dbReference>
<dbReference type="InterPro" id="IPR000473">
    <property type="entry name" value="Ribosomal_bL36"/>
</dbReference>
<dbReference type="InterPro" id="IPR035977">
    <property type="entry name" value="Ribosomal_bL36_sp"/>
</dbReference>
<dbReference type="InterPro" id="IPR047621">
    <property type="entry name" value="Ribosomal_L36_bact"/>
</dbReference>
<dbReference type="NCBIfam" id="NF002021">
    <property type="entry name" value="PRK00831.1"/>
    <property type="match status" value="1"/>
</dbReference>
<dbReference type="NCBIfam" id="TIGR01022">
    <property type="entry name" value="rpmJ_bact"/>
    <property type="match status" value="1"/>
</dbReference>
<dbReference type="PANTHER" id="PTHR47781">
    <property type="entry name" value="50S RIBOSOMAL PROTEIN L36 2"/>
    <property type="match status" value="1"/>
</dbReference>
<dbReference type="PANTHER" id="PTHR47781:SF1">
    <property type="entry name" value="LARGE RIBOSOMAL SUBUNIT PROTEIN BL36B"/>
    <property type="match status" value="1"/>
</dbReference>
<dbReference type="Pfam" id="PF00444">
    <property type="entry name" value="Ribosomal_L36"/>
    <property type="match status" value="1"/>
</dbReference>
<dbReference type="SUPFAM" id="SSF57840">
    <property type="entry name" value="Ribosomal protein L36"/>
    <property type="match status" value="1"/>
</dbReference>
<proteinExistence type="inferred from homology"/>